<dbReference type="EC" id="3.6.-.-" evidence="1"/>
<dbReference type="EMBL" id="CP000038">
    <property type="protein sequence ID" value="AAZ90205.1"/>
    <property type="molecule type" value="Genomic_DNA"/>
</dbReference>
<dbReference type="RefSeq" id="WP_001282364.1">
    <property type="nucleotide sequence ID" value="NC_007384.1"/>
</dbReference>
<dbReference type="SMR" id="Q3YWA7"/>
<dbReference type="GeneID" id="93778449"/>
<dbReference type="KEGG" id="ssn:SSON_3657"/>
<dbReference type="HOGENOM" id="CLU_019624_4_1_6"/>
<dbReference type="Proteomes" id="UP000002529">
    <property type="component" value="Chromosome"/>
</dbReference>
<dbReference type="GO" id="GO:0005829">
    <property type="term" value="C:cytosol"/>
    <property type="evidence" value="ECO:0007669"/>
    <property type="project" value="TreeGrafter"/>
</dbReference>
<dbReference type="GO" id="GO:0005525">
    <property type="term" value="F:GTP binding"/>
    <property type="evidence" value="ECO:0007669"/>
    <property type="project" value="UniProtKB-UniRule"/>
</dbReference>
<dbReference type="GO" id="GO:0003924">
    <property type="term" value="F:GTPase activity"/>
    <property type="evidence" value="ECO:0007669"/>
    <property type="project" value="UniProtKB-UniRule"/>
</dbReference>
<dbReference type="GO" id="GO:0046872">
    <property type="term" value="F:metal ion binding"/>
    <property type="evidence" value="ECO:0007669"/>
    <property type="project" value="UniProtKB-KW"/>
</dbReference>
<dbReference type="GO" id="GO:0030488">
    <property type="term" value="P:tRNA methylation"/>
    <property type="evidence" value="ECO:0007669"/>
    <property type="project" value="TreeGrafter"/>
</dbReference>
<dbReference type="GO" id="GO:0002098">
    <property type="term" value="P:tRNA wobble uridine modification"/>
    <property type="evidence" value="ECO:0007669"/>
    <property type="project" value="TreeGrafter"/>
</dbReference>
<dbReference type="CDD" id="cd04164">
    <property type="entry name" value="trmE"/>
    <property type="match status" value="1"/>
</dbReference>
<dbReference type="CDD" id="cd14858">
    <property type="entry name" value="TrmE_N"/>
    <property type="match status" value="1"/>
</dbReference>
<dbReference type="FunFam" id="3.30.1360.120:FF:000001">
    <property type="entry name" value="tRNA modification GTPase MnmE"/>
    <property type="match status" value="1"/>
</dbReference>
<dbReference type="FunFam" id="3.40.50.300:FF:000249">
    <property type="entry name" value="tRNA modification GTPase MnmE"/>
    <property type="match status" value="1"/>
</dbReference>
<dbReference type="Gene3D" id="3.40.50.300">
    <property type="entry name" value="P-loop containing nucleotide triphosphate hydrolases"/>
    <property type="match status" value="1"/>
</dbReference>
<dbReference type="Gene3D" id="3.30.1360.120">
    <property type="entry name" value="Probable tRNA modification gtpase trme, domain 1"/>
    <property type="match status" value="1"/>
</dbReference>
<dbReference type="Gene3D" id="1.20.120.430">
    <property type="entry name" value="tRNA modification GTPase MnmE domain 2"/>
    <property type="match status" value="1"/>
</dbReference>
<dbReference type="HAMAP" id="MF_00379">
    <property type="entry name" value="GTPase_MnmE"/>
    <property type="match status" value="1"/>
</dbReference>
<dbReference type="InterPro" id="IPR031168">
    <property type="entry name" value="G_TrmE"/>
</dbReference>
<dbReference type="InterPro" id="IPR006073">
    <property type="entry name" value="GTP-bd"/>
</dbReference>
<dbReference type="InterPro" id="IPR018948">
    <property type="entry name" value="GTP-bd_TrmE_N"/>
</dbReference>
<dbReference type="InterPro" id="IPR004520">
    <property type="entry name" value="GTPase_MnmE"/>
</dbReference>
<dbReference type="InterPro" id="IPR027368">
    <property type="entry name" value="MnmE_dom2"/>
</dbReference>
<dbReference type="InterPro" id="IPR025867">
    <property type="entry name" value="MnmE_helical"/>
</dbReference>
<dbReference type="InterPro" id="IPR027417">
    <property type="entry name" value="P-loop_NTPase"/>
</dbReference>
<dbReference type="InterPro" id="IPR005225">
    <property type="entry name" value="Small_GTP-bd"/>
</dbReference>
<dbReference type="InterPro" id="IPR027266">
    <property type="entry name" value="TrmE/GcvT_dom1"/>
</dbReference>
<dbReference type="NCBIfam" id="TIGR00450">
    <property type="entry name" value="mnmE_trmE_thdF"/>
    <property type="match status" value="1"/>
</dbReference>
<dbReference type="NCBIfam" id="NF003661">
    <property type="entry name" value="PRK05291.1-3"/>
    <property type="match status" value="1"/>
</dbReference>
<dbReference type="NCBIfam" id="TIGR00231">
    <property type="entry name" value="small_GTP"/>
    <property type="match status" value="1"/>
</dbReference>
<dbReference type="PANTHER" id="PTHR42714">
    <property type="entry name" value="TRNA MODIFICATION GTPASE GTPBP3"/>
    <property type="match status" value="1"/>
</dbReference>
<dbReference type="PANTHER" id="PTHR42714:SF2">
    <property type="entry name" value="TRNA MODIFICATION GTPASE GTPBP3, MITOCHONDRIAL"/>
    <property type="match status" value="1"/>
</dbReference>
<dbReference type="Pfam" id="PF01926">
    <property type="entry name" value="MMR_HSR1"/>
    <property type="match status" value="1"/>
</dbReference>
<dbReference type="Pfam" id="PF12631">
    <property type="entry name" value="MnmE_helical"/>
    <property type="match status" value="1"/>
</dbReference>
<dbReference type="Pfam" id="PF10396">
    <property type="entry name" value="TrmE_N"/>
    <property type="match status" value="1"/>
</dbReference>
<dbReference type="SUPFAM" id="SSF52540">
    <property type="entry name" value="P-loop containing nucleoside triphosphate hydrolases"/>
    <property type="match status" value="1"/>
</dbReference>
<dbReference type="SUPFAM" id="SSF116878">
    <property type="entry name" value="TrmE connector domain"/>
    <property type="match status" value="1"/>
</dbReference>
<dbReference type="PROSITE" id="PS51709">
    <property type="entry name" value="G_TRME"/>
    <property type="match status" value="1"/>
</dbReference>
<reference key="1">
    <citation type="journal article" date="2005" name="Nucleic Acids Res.">
        <title>Genome dynamics and diversity of Shigella species, the etiologic agents of bacillary dysentery.</title>
        <authorList>
            <person name="Yang F."/>
            <person name="Yang J."/>
            <person name="Zhang X."/>
            <person name="Chen L."/>
            <person name="Jiang Y."/>
            <person name="Yan Y."/>
            <person name="Tang X."/>
            <person name="Wang J."/>
            <person name="Xiong Z."/>
            <person name="Dong J."/>
            <person name="Xue Y."/>
            <person name="Zhu Y."/>
            <person name="Xu X."/>
            <person name="Sun L."/>
            <person name="Chen S."/>
            <person name="Nie H."/>
            <person name="Peng J."/>
            <person name="Xu J."/>
            <person name="Wang Y."/>
            <person name="Yuan Z."/>
            <person name="Wen Y."/>
            <person name="Yao Z."/>
            <person name="Shen Y."/>
            <person name="Qiang B."/>
            <person name="Hou Y."/>
            <person name="Yu J."/>
            <person name="Jin Q."/>
        </authorList>
    </citation>
    <scope>NUCLEOTIDE SEQUENCE [LARGE SCALE GENOMIC DNA]</scope>
    <source>
        <strain>Ss046</strain>
    </source>
</reference>
<evidence type="ECO:0000255" key="1">
    <source>
        <dbReference type="HAMAP-Rule" id="MF_00379"/>
    </source>
</evidence>
<name>MNME_SHISS</name>
<feature type="chain" id="PRO_1000048879" description="tRNA modification GTPase MnmE">
    <location>
        <begin position="1"/>
        <end position="454"/>
    </location>
</feature>
<feature type="domain" description="TrmE-type G">
    <location>
        <begin position="216"/>
        <end position="377"/>
    </location>
</feature>
<feature type="binding site" evidence="1">
    <location>
        <position position="23"/>
    </location>
    <ligand>
        <name>(6S)-5-formyl-5,6,7,8-tetrahydrofolate</name>
        <dbReference type="ChEBI" id="CHEBI:57457"/>
    </ligand>
</feature>
<feature type="binding site" evidence="1">
    <location>
        <position position="80"/>
    </location>
    <ligand>
        <name>(6S)-5-formyl-5,6,7,8-tetrahydrofolate</name>
        <dbReference type="ChEBI" id="CHEBI:57457"/>
    </ligand>
</feature>
<feature type="binding site" evidence="1">
    <location>
        <position position="120"/>
    </location>
    <ligand>
        <name>(6S)-5-formyl-5,6,7,8-tetrahydrofolate</name>
        <dbReference type="ChEBI" id="CHEBI:57457"/>
    </ligand>
</feature>
<feature type="binding site" evidence="1">
    <location>
        <begin position="226"/>
        <end position="231"/>
    </location>
    <ligand>
        <name>GTP</name>
        <dbReference type="ChEBI" id="CHEBI:37565"/>
    </ligand>
</feature>
<feature type="binding site" evidence="1">
    <location>
        <position position="226"/>
    </location>
    <ligand>
        <name>K(+)</name>
        <dbReference type="ChEBI" id="CHEBI:29103"/>
    </ligand>
</feature>
<feature type="binding site" evidence="1">
    <location>
        <position position="230"/>
    </location>
    <ligand>
        <name>Mg(2+)</name>
        <dbReference type="ChEBI" id="CHEBI:18420"/>
    </ligand>
</feature>
<feature type="binding site" evidence="1">
    <location>
        <begin position="245"/>
        <end position="251"/>
    </location>
    <ligand>
        <name>GTP</name>
        <dbReference type="ChEBI" id="CHEBI:37565"/>
    </ligand>
</feature>
<feature type="binding site" evidence="1">
    <location>
        <position position="245"/>
    </location>
    <ligand>
        <name>K(+)</name>
        <dbReference type="ChEBI" id="CHEBI:29103"/>
    </ligand>
</feature>
<feature type="binding site" evidence="1">
    <location>
        <position position="247"/>
    </location>
    <ligand>
        <name>K(+)</name>
        <dbReference type="ChEBI" id="CHEBI:29103"/>
    </ligand>
</feature>
<feature type="binding site" evidence="1">
    <location>
        <position position="250"/>
    </location>
    <ligand>
        <name>K(+)</name>
        <dbReference type="ChEBI" id="CHEBI:29103"/>
    </ligand>
</feature>
<feature type="binding site" evidence="1">
    <location>
        <position position="251"/>
    </location>
    <ligand>
        <name>Mg(2+)</name>
        <dbReference type="ChEBI" id="CHEBI:18420"/>
    </ligand>
</feature>
<feature type="binding site" evidence="1">
    <location>
        <begin position="270"/>
        <end position="273"/>
    </location>
    <ligand>
        <name>GTP</name>
        <dbReference type="ChEBI" id="CHEBI:37565"/>
    </ligand>
</feature>
<feature type="binding site" evidence="1">
    <location>
        <begin position="335"/>
        <end position="338"/>
    </location>
    <ligand>
        <name>GTP</name>
        <dbReference type="ChEBI" id="CHEBI:37565"/>
    </ligand>
</feature>
<feature type="binding site" evidence="1">
    <location>
        <begin position="358"/>
        <end position="360"/>
    </location>
    <ligand>
        <name>GTP</name>
        <dbReference type="ChEBI" id="CHEBI:37565"/>
    </ligand>
</feature>
<feature type="binding site" evidence="1">
    <location>
        <position position="454"/>
    </location>
    <ligand>
        <name>(6S)-5-formyl-5,6,7,8-tetrahydrofolate</name>
        <dbReference type="ChEBI" id="CHEBI:57457"/>
    </ligand>
</feature>
<keyword id="KW-0963">Cytoplasm</keyword>
<keyword id="KW-0342">GTP-binding</keyword>
<keyword id="KW-0378">Hydrolase</keyword>
<keyword id="KW-0460">Magnesium</keyword>
<keyword id="KW-0479">Metal-binding</keyword>
<keyword id="KW-0547">Nucleotide-binding</keyword>
<keyword id="KW-0630">Potassium</keyword>
<keyword id="KW-1185">Reference proteome</keyword>
<keyword id="KW-0819">tRNA processing</keyword>
<accession>Q3YWA7</accession>
<organism>
    <name type="scientific">Shigella sonnei (strain Ss046)</name>
    <dbReference type="NCBI Taxonomy" id="300269"/>
    <lineage>
        <taxon>Bacteria</taxon>
        <taxon>Pseudomonadati</taxon>
        <taxon>Pseudomonadota</taxon>
        <taxon>Gammaproteobacteria</taxon>
        <taxon>Enterobacterales</taxon>
        <taxon>Enterobacteriaceae</taxon>
        <taxon>Shigella</taxon>
    </lineage>
</organism>
<comment type="function">
    <text evidence="1">Exhibits a very high intrinsic GTPase hydrolysis rate. Involved in the addition of a carboxymethylaminomethyl (cmnm) group at the wobble position (U34) of certain tRNAs, forming tRNA-cmnm(5)s(2)U34.</text>
</comment>
<comment type="cofactor">
    <cofactor evidence="1">
        <name>K(+)</name>
        <dbReference type="ChEBI" id="CHEBI:29103"/>
    </cofactor>
    <text evidence="1">Binds 1 potassium ion per subunit.</text>
</comment>
<comment type="subunit">
    <text evidence="1">Homodimer. Heterotetramer of two MnmE and two MnmG subunits.</text>
</comment>
<comment type="subcellular location">
    <subcellularLocation>
        <location evidence="1">Cytoplasm</location>
    </subcellularLocation>
</comment>
<comment type="similarity">
    <text evidence="1">Belongs to the TRAFAC class TrmE-Era-EngA-EngB-Septin-like GTPase superfamily. TrmE GTPase family.</text>
</comment>
<protein>
    <recommendedName>
        <fullName evidence="1">tRNA modification GTPase MnmE</fullName>
        <ecNumber evidence="1">3.6.-.-</ecNumber>
    </recommendedName>
</protein>
<gene>
    <name evidence="1" type="primary">mnmE</name>
    <name evidence="1" type="synonym">trmE</name>
    <name type="ordered locus">SSON_3657</name>
</gene>
<proteinExistence type="inferred from homology"/>
<sequence length="454" mass="49211">MSDNDTIVAQATPPGRGGVGILRISGLKAREVAETVLGKLPKPRYADYLPFKDADGSVLDQGIALWFPGPNSFTGEDVLELQGHGGPVILDLLLKRILTIPGLRIARPGEFSERAFLNDKLDLAQAEAIADLIDASSEQAARSALNSLQGAFSARVNHLVEALTHLRIYVEAAIDFPDEEIDFLSDGKIEAQLNDVIADLDAVRAEARQGSLLREGMKVVIAGRPNAGKSSLLNALAGREAAIVTDIAGTTRDVLREHIHIDGMPLHIIDTAGLREASDEVERIGIERAWQEIEQADRVLFMVDGTTTDAVDPAEIWPEFIARLPAKLPITVVRNKADITGETLGMSEVNGHALIRLSARTGEGVEVLRNHLKQSMGFDTNMEGGFLARRRHLQALEQAAEHLQQGKAQLLGAWAGELLAEELRLAQQNLSEITGEFTSDDLLGRIFSSFCIGK</sequence>